<feature type="chain" id="PRO_0000035797" description="Arginine--tRNA ligase, cytoplasmic">
    <location>
        <begin position="1"/>
        <end position="660"/>
    </location>
</feature>
<feature type="region of interest" description="Could be involved in the assembly of the multisynthetase complex">
    <location>
        <begin position="1"/>
        <end position="72"/>
    </location>
</feature>
<feature type="region of interest" description="Interaction with tRNA" evidence="1">
    <location>
        <begin position="529"/>
        <end position="543"/>
    </location>
</feature>
<feature type="short sequence motif" description="'HIGH' region">
    <location>
        <begin position="201"/>
        <end position="212"/>
    </location>
</feature>
<feature type="binding site" evidence="11 16">
    <location>
        <begin position="200"/>
        <end position="202"/>
    </location>
    <ligand>
        <name>L-arginine</name>
        <dbReference type="ChEBI" id="CHEBI:32682"/>
    </ligand>
</feature>
<feature type="binding site" evidence="11 16">
    <location>
        <position position="211"/>
    </location>
    <ligand>
        <name>L-arginine</name>
        <dbReference type="ChEBI" id="CHEBI:32682"/>
    </ligand>
</feature>
<feature type="binding site" evidence="11 16">
    <location>
        <position position="384"/>
    </location>
    <ligand>
        <name>L-arginine</name>
        <dbReference type="ChEBI" id="CHEBI:32682"/>
    </ligand>
</feature>
<feature type="binding site" evidence="11 16">
    <location>
        <position position="388"/>
    </location>
    <ligand>
        <name>L-arginine</name>
        <dbReference type="ChEBI" id="CHEBI:32682"/>
    </ligand>
</feature>
<feature type="binding site" evidence="11 16">
    <location>
        <position position="412"/>
    </location>
    <ligand>
        <name>L-arginine</name>
        <dbReference type="ChEBI" id="CHEBI:32682"/>
    </ligand>
</feature>
<feature type="modified residue" description="N-acetylmethionine" evidence="13 20 21 22">
    <location>
        <position position="1"/>
    </location>
</feature>
<feature type="splice variant" id="VSP_018905" description="In isoform Monomeric." evidence="14">
    <location>
        <begin position="1"/>
        <end position="72"/>
    </location>
</feature>
<feature type="sequence variant" id="VAR_072666" description="In HLD9; dbSNP:rs672601372." evidence="10">
    <original>D</original>
    <variation>G</variation>
    <location>
        <position position="2"/>
    </location>
</feature>
<feature type="sequence variant" id="VAR_020106" description="In dbSNP:rs244903.">
    <original>V</original>
    <variation>I</variation>
    <location>
        <position position="3"/>
    </location>
</feature>
<feature type="sequence variant" id="VAR_052635" description="In dbSNP:rs1059443.">
    <original>R</original>
    <variation>G</variation>
    <location>
        <position position="135"/>
    </location>
</feature>
<feature type="sequence variant" id="VAR_020107" description="In dbSNP:rs2305734.">
    <original>F</original>
    <variation>Y</variation>
    <location>
        <position position="397"/>
    </location>
</feature>
<feature type="sequence variant" id="VAR_072667" description="In HLD9; dbSNP:rs369398935." evidence="10">
    <original>R</original>
    <variation>Q</variation>
    <location>
        <position position="512"/>
    </location>
</feature>
<feature type="sequence conflict" description="In Ref. 1; AAB35627." evidence="14" ref="1">
    <original>P</original>
    <variation>S</variation>
    <location>
        <position position="39"/>
    </location>
</feature>
<feature type="sequence conflict" description="In Ref. 1; AAB35627." evidence="14" ref="1">
    <original>QK</original>
    <variation>PE</variation>
    <location>
        <begin position="130"/>
        <end position="131"/>
    </location>
</feature>
<feature type="sequence conflict" description="In Ref. 1; AAB35627." evidence="14" ref="1">
    <original>REI</original>
    <variation>GEF</variation>
    <location>
        <begin position="135"/>
        <end position="137"/>
    </location>
</feature>
<feature type="sequence conflict" description="In Ref. 1; AAB35627." evidence="14" ref="1">
    <original>DNECIEKVEI</original>
    <variation>AMDVLKRVEF</variation>
    <location>
        <begin position="147"/>
        <end position="156"/>
    </location>
</feature>
<feature type="sequence conflict" description="In Ref. 1; AAB35627." evidence="14" ref="1">
    <original>V</original>
    <variation>G</variation>
    <location>
        <position position="164"/>
    </location>
</feature>
<feature type="sequence conflict" description="In Ref. 3; BAG37326." evidence="14" ref="3">
    <original>K</original>
    <variation>N</variation>
    <location>
        <position position="278"/>
    </location>
</feature>
<feature type="sequence conflict" description="In Ref. 1; AAB35627." evidence="14" ref="1">
    <original>WKLIC</original>
    <variation>YLLMS</variation>
    <location>
        <begin position="308"/>
        <end position="312"/>
    </location>
</feature>
<feature type="sequence conflict" description="In Ref. 4; BAD96517." evidence="14" ref="4">
    <original>R</original>
    <variation>G</variation>
    <location>
        <position position="341"/>
    </location>
</feature>
<feature type="sequence conflict" description="In Ref. 3; BAG37326." evidence="14" ref="3">
    <original>D</original>
    <variation>G</variation>
    <location>
        <position position="358"/>
    </location>
</feature>
<feature type="sequence conflict" description="In Ref. 4; BAD96517." evidence="14" ref="4">
    <original>T</original>
    <variation>A</variation>
    <location>
        <position position="487"/>
    </location>
</feature>
<feature type="sequence conflict" description="In Ref. 1; AAB35627." evidence="14" ref="1">
    <original>D</original>
    <variation>V</variation>
    <location>
        <position position="567"/>
    </location>
</feature>
<feature type="sequence conflict" description="In Ref. 1; AAB35627." evidence="14" ref="1">
    <original>MLLCEA</original>
    <variation>ILCET</variation>
    <location>
        <begin position="635"/>
        <end position="640"/>
    </location>
</feature>
<feature type="sequence conflict" description="In Ref. 1; AAB35627." evidence="14" ref="1">
    <original>I</original>
    <variation>T</variation>
    <location>
        <position position="651"/>
    </location>
</feature>
<feature type="sequence conflict" description="In Ref. 1; AAB35627." evidence="14" ref="1">
    <original>VQRM</original>
    <variation>GPRV</variation>
    <location>
        <begin position="657"/>
        <end position="660"/>
    </location>
</feature>
<feature type="helix" evidence="25">
    <location>
        <begin position="76"/>
        <end position="91"/>
    </location>
</feature>
<feature type="strand" evidence="25">
    <location>
        <begin position="102"/>
        <end position="104"/>
    </location>
</feature>
<feature type="strand" evidence="25">
    <location>
        <begin position="108"/>
        <end position="110"/>
    </location>
</feature>
<feature type="strand" evidence="25">
    <location>
        <begin position="112"/>
        <end position="115"/>
    </location>
</feature>
<feature type="helix" evidence="25">
    <location>
        <begin position="117"/>
        <end position="123"/>
    </location>
</feature>
<feature type="helix" evidence="25">
    <location>
        <begin position="134"/>
        <end position="143"/>
    </location>
</feature>
<feature type="strand" evidence="25">
    <location>
        <begin position="149"/>
        <end position="155"/>
    </location>
</feature>
<feature type="turn" evidence="23">
    <location>
        <begin position="158"/>
        <end position="160"/>
    </location>
</feature>
<feature type="strand" evidence="25">
    <location>
        <begin position="162"/>
        <end position="166"/>
    </location>
</feature>
<feature type="helix" evidence="25">
    <location>
        <begin position="168"/>
        <end position="181"/>
    </location>
</feature>
<feature type="strand" evidence="25">
    <location>
        <begin position="193"/>
        <end position="197"/>
    </location>
</feature>
<feature type="helix" evidence="25">
    <location>
        <begin position="209"/>
        <end position="227"/>
    </location>
</feature>
<feature type="strand" evidence="25">
    <location>
        <begin position="231"/>
        <end position="236"/>
    </location>
</feature>
<feature type="strand" evidence="23">
    <location>
        <begin position="241"/>
        <end position="243"/>
    </location>
</feature>
<feature type="helix" evidence="25">
    <location>
        <begin position="244"/>
        <end position="255"/>
    </location>
</feature>
<feature type="helix" evidence="25">
    <location>
        <begin position="257"/>
        <end position="260"/>
    </location>
</feature>
<feature type="helix" evidence="25">
    <location>
        <begin position="269"/>
        <end position="282"/>
    </location>
</feature>
<feature type="helix" evidence="25">
    <location>
        <begin position="285"/>
        <end position="298"/>
    </location>
</feature>
<feature type="turn" evidence="25">
    <location>
        <begin position="302"/>
        <end position="304"/>
    </location>
</feature>
<feature type="helix" evidence="25">
    <location>
        <begin position="305"/>
        <end position="325"/>
    </location>
</feature>
<feature type="helix" evidence="25">
    <location>
        <begin position="335"/>
        <end position="341"/>
    </location>
</feature>
<feature type="helix" evidence="25">
    <location>
        <begin position="342"/>
        <end position="351"/>
    </location>
</feature>
<feature type="strand" evidence="25">
    <location>
        <begin position="355"/>
        <end position="358"/>
    </location>
</feature>
<feature type="strand" evidence="25">
    <location>
        <begin position="361"/>
        <end position="364"/>
    </location>
</feature>
<feature type="strand" evidence="25">
    <location>
        <begin position="373"/>
        <end position="376"/>
    </location>
</feature>
<feature type="helix" evidence="25">
    <location>
        <begin position="384"/>
        <end position="397"/>
    </location>
</feature>
<feature type="strand" evidence="25">
    <location>
        <begin position="402"/>
        <end position="409"/>
    </location>
</feature>
<feature type="helix" evidence="25">
    <location>
        <begin position="410"/>
        <end position="412"/>
    </location>
</feature>
<feature type="helix" evidence="25">
    <location>
        <begin position="413"/>
        <end position="425"/>
    </location>
</feature>
<feature type="turn" evidence="25">
    <location>
        <begin position="431"/>
        <end position="433"/>
    </location>
</feature>
<feature type="strand" evidence="25">
    <location>
        <begin position="434"/>
        <end position="441"/>
    </location>
</feature>
<feature type="strand" evidence="25">
    <location>
        <begin position="449"/>
        <end position="451"/>
    </location>
</feature>
<feature type="strand" evidence="25">
    <location>
        <begin position="455"/>
        <end position="458"/>
    </location>
</feature>
<feature type="helix" evidence="25">
    <location>
        <begin position="462"/>
        <end position="478"/>
    </location>
</feature>
<feature type="strand" evidence="25">
    <location>
        <begin position="482"/>
        <end position="485"/>
    </location>
</feature>
<feature type="helix" evidence="25">
    <location>
        <begin position="487"/>
        <end position="490"/>
    </location>
</feature>
<feature type="helix" evidence="25">
    <location>
        <begin position="493"/>
        <end position="508"/>
    </location>
</feature>
<feature type="strand" evidence="24">
    <location>
        <begin position="512"/>
        <end position="514"/>
    </location>
</feature>
<feature type="helix" evidence="25">
    <location>
        <begin position="520"/>
        <end position="523"/>
    </location>
</feature>
<feature type="strand" evidence="25">
    <location>
        <begin position="526"/>
        <end position="530"/>
    </location>
</feature>
<feature type="helix" evidence="25">
    <location>
        <begin position="531"/>
        <end position="546"/>
    </location>
</feature>
<feature type="turn" evidence="25">
    <location>
        <begin position="547"/>
        <end position="549"/>
    </location>
</feature>
<feature type="helix" evidence="25">
    <location>
        <begin position="552"/>
        <end position="561"/>
    </location>
</feature>
<feature type="helix" evidence="25">
    <location>
        <begin position="569"/>
        <end position="578"/>
    </location>
</feature>
<feature type="helix" evidence="25">
    <location>
        <begin position="581"/>
        <end position="591"/>
    </location>
</feature>
<feature type="helix" evidence="25">
    <location>
        <begin position="595"/>
        <end position="614"/>
    </location>
</feature>
<feature type="strand" evidence="25">
    <location>
        <begin position="617"/>
        <end position="620"/>
    </location>
</feature>
<feature type="turn" evidence="25">
    <location>
        <begin position="622"/>
        <end position="624"/>
    </location>
</feature>
<feature type="strand" evidence="25">
    <location>
        <begin position="627"/>
        <end position="630"/>
    </location>
</feature>
<feature type="helix" evidence="25">
    <location>
        <begin position="632"/>
        <end position="652"/>
    </location>
</feature>
<feature type="modified residue" description="N-acetylmethionine" evidence="13">
    <location sequence="P54136-2">
        <position position="1"/>
    </location>
</feature>
<gene>
    <name evidence="15" type="primary">RARS1</name>
    <name type="synonym">RARS</name>
</gene>
<comment type="function">
    <text evidence="6 12">Forms part of a macromolecular complex that catalyzes the attachment of specific amino acids to cognate tRNAs during protein synthesis (PubMed:25288775). Modulates the secretion of AIMP1 and may be involved in generation of the inflammatory cytokine EMAP2 from AIMP1 (PubMed:17443684).</text>
</comment>
<comment type="catalytic activity">
    <reaction evidence="4 12">
        <text>tRNA(Arg) + L-arginine + ATP = L-arginyl-tRNA(Arg) + AMP + diphosphate</text>
        <dbReference type="Rhea" id="RHEA:20301"/>
        <dbReference type="Rhea" id="RHEA-COMP:9658"/>
        <dbReference type="Rhea" id="RHEA-COMP:9673"/>
        <dbReference type="ChEBI" id="CHEBI:30616"/>
        <dbReference type="ChEBI" id="CHEBI:32682"/>
        <dbReference type="ChEBI" id="CHEBI:33019"/>
        <dbReference type="ChEBI" id="CHEBI:78442"/>
        <dbReference type="ChEBI" id="CHEBI:78513"/>
        <dbReference type="ChEBI" id="CHEBI:456215"/>
        <dbReference type="EC" id="6.1.1.19"/>
    </reaction>
</comment>
<comment type="biophysicochemical properties">
    <kinetics>
        <KM evidence="4">3.9 uM for arginine (ATP-PPi exchange at 37 degrees Celsius)</KM>
        <KM evidence="4">3.5 uM for arginine (arginylation at 37 degrees Celsius)</KM>
        <KM evidence="4">1183 uM for ATP (ATP-PPi exchange at 37 Celsius)</KM>
        <KM evidence="4">910 uM for ATP (arginylation at 37 Celsius)</KM>
        <KM evidence="4">0.05 uM for calf liver tRNA-Arg (ATP-PPi exchange at 37 Celsius)</KM>
        <KM evidence="4">0.41 uM for calf liver tRNA-Arg (arginylation at 37 Celsius)</KM>
    </kinetics>
</comment>
<comment type="subunit">
    <text evidence="2 4 6 7 8 9 11 12">Interacts (via N-terminus) with AIMP1 (via N-terminus); this stimulates its catalytic activity (PubMed:10358004, PubMed:25288775). Interacts (via N-terminus) with LARS2 (via C-terminus) (PubMed:16055448, PubMed:17443684). Monomer (PubMed:24859084). Part of a multisubunit complex that groups tRNA ligases for Arg (RARS1), Asp (DARS1), Gln (QARS1), Ile (IARS1), Leu (LARS1), Lys (KARS1), Met (MARS1) the bifunctional ligase for Glu and Pro (EPRS1) and the auxiliary subunits AIMP1/p43, AIMP2/p38 and EEF1E1/p18 (PubMed:19131329, PubMed:19289464). Interacts with QARS1 (PubMed:24656866). Part of a complex composed of RARS1, QARS1 and AIMP1 (PubMed:25288775).</text>
</comment>
<comment type="interaction">
    <interactant intactId="EBI-355482">
        <id>P54136</id>
    </interactant>
    <interactant intactId="EBI-12412735">
        <id>Q12904-2</id>
        <label>AIMP1</label>
    </interactant>
    <organismsDiffer>false</organismsDiffer>
    <experiments>3</experiments>
</comment>
<comment type="interaction">
    <interactant intactId="EBI-355482">
        <id>P54136</id>
    </interactant>
    <interactant intactId="EBI-2810325">
        <id>Q96NT0</id>
        <label>CCDC115</label>
    </interactant>
    <organismsDiffer>false</organismsDiffer>
    <experiments>4</experiments>
</comment>
<comment type="interaction">
    <interactant intactId="EBI-355482">
        <id>P54136</id>
    </interactant>
    <interactant intactId="EBI-355315">
        <id>P07814</id>
        <label>EPRS1</label>
    </interactant>
    <organismsDiffer>false</organismsDiffer>
    <experiments>3</experiments>
</comment>
<comment type="interaction">
    <interactant intactId="EBI-355482">
        <id>P54136</id>
    </interactant>
    <interactant intactId="EBI-356077">
        <id>Q9P2J5</id>
        <label>LARS1</label>
    </interactant>
    <organismsDiffer>false</organismsDiffer>
    <experiments>6</experiments>
</comment>
<comment type="interaction">
    <interactant intactId="EBI-355482">
        <id>P54136</id>
    </interactant>
    <interactant intactId="EBI-6597673">
        <id>Q96K83</id>
        <label>ZNF521</label>
    </interactant>
    <organismsDiffer>false</organismsDiffer>
    <experiments>3</experiments>
</comment>
<comment type="subcellular location">
    <subcellularLocation>
        <location evidence="3 4 5">Cytoplasm</location>
    </subcellularLocation>
    <subcellularLocation>
        <location evidence="8">Cytoplasm</location>
        <location evidence="8">Cytosol</location>
    </subcellularLocation>
</comment>
<comment type="alternative products">
    <event type="alternative initiation"/>
    <isoform>
        <id>P54136-1</id>
        <name>Complexed</name>
        <sequence type="displayed"/>
    </isoform>
    <isoform>
        <id>P54136-2</id>
        <name>Monomeric</name>
        <sequence type="described" ref="VSP_018905"/>
    </isoform>
</comment>
<comment type="domain">
    <text evidence="12">The alpha-helical N-terminus (residues 1-72) mediates interaction with AIMP1 and thereby contributes to the assembly of the multisynthetase complex.</text>
</comment>
<comment type="disease" evidence="10">
    <disease id="DI-04288">
        <name>Leukodystrophy, hypomyelinating, 9</name>
        <acronym>HLD9</acronym>
        <description>An autosomal recessive neurodegenerative disorder characterized by delayed psychomotor development, severe spasticity, nystagmus, and ataxia associated with diffuse hypomyelination apparent on brain MRI.</description>
        <dbReference type="MIM" id="616140"/>
    </disease>
    <text>The disease is caused by variants affecting the gene represented in this entry.</text>
</comment>
<comment type="similarity">
    <text evidence="14">Belongs to the class-I aminoacyl-tRNA synthetase family.</text>
</comment>
<name>SYRC_HUMAN</name>
<reference key="1">
    <citation type="journal article" date="1995" name="Gene">
        <title>Cloning and characterization of cDNA encoding a human arginyl-tRNA synthetase.</title>
        <authorList>
            <person name="Girjes A.A."/>
            <person name="Hobson K."/>
            <person name="Chen P."/>
            <person name="Lavin M.F."/>
        </authorList>
    </citation>
    <scope>NUCLEOTIDE SEQUENCE [MRNA]</scope>
</reference>
<reference key="2">
    <citation type="submission" date="2003-05" db="EMBL/GenBank/DDBJ databases">
        <title>Cloning of human full-length CDSs in BD Creator(TM) system donor vector.</title>
        <authorList>
            <person name="Kalnine N."/>
            <person name="Chen X."/>
            <person name="Rolfs A."/>
            <person name="Halleck A."/>
            <person name="Hines L."/>
            <person name="Eisenstein S."/>
            <person name="Koundinya M."/>
            <person name="Raphael J."/>
            <person name="Moreira D."/>
            <person name="Kelley T."/>
            <person name="LaBaer J."/>
            <person name="Lin Y."/>
            <person name="Phelan M."/>
            <person name="Farmer A."/>
        </authorList>
    </citation>
    <scope>NUCLEOTIDE SEQUENCE [LARGE SCALE MRNA]</scope>
</reference>
<reference key="3">
    <citation type="journal article" date="2004" name="Nat. Genet.">
        <title>Complete sequencing and characterization of 21,243 full-length human cDNAs.</title>
        <authorList>
            <person name="Ota T."/>
            <person name="Suzuki Y."/>
            <person name="Nishikawa T."/>
            <person name="Otsuki T."/>
            <person name="Sugiyama T."/>
            <person name="Irie R."/>
            <person name="Wakamatsu A."/>
            <person name="Hayashi K."/>
            <person name="Sato H."/>
            <person name="Nagai K."/>
            <person name="Kimura K."/>
            <person name="Makita H."/>
            <person name="Sekine M."/>
            <person name="Obayashi M."/>
            <person name="Nishi T."/>
            <person name="Shibahara T."/>
            <person name="Tanaka T."/>
            <person name="Ishii S."/>
            <person name="Yamamoto J."/>
            <person name="Saito K."/>
            <person name="Kawai Y."/>
            <person name="Isono Y."/>
            <person name="Nakamura Y."/>
            <person name="Nagahari K."/>
            <person name="Murakami K."/>
            <person name="Yasuda T."/>
            <person name="Iwayanagi T."/>
            <person name="Wagatsuma M."/>
            <person name="Shiratori A."/>
            <person name="Sudo H."/>
            <person name="Hosoiri T."/>
            <person name="Kaku Y."/>
            <person name="Kodaira H."/>
            <person name="Kondo H."/>
            <person name="Sugawara M."/>
            <person name="Takahashi M."/>
            <person name="Kanda K."/>
            <person name="Yokoi T."/>
            <person name="Furuya T."/>
            <person name="Kikkawa E."/>
            <person name="Omura Y."/>
            <person name="Abe K."/>
            <person name="Kamihara K."/>
            <person name="Katsuta N."/>
            <person name="Sato K."/>
            <person name="Tanikawa M."/>
            <person name="Yamazaki M."/>
            <person name="Ninomiya K."/>
            <person name="Ishibashi T."/>
            <person name="Yamashita H."/>
            <person name="Murakawa K."/>
            <person name="Fujimori K."/>
            <person name="Tanai H."/>
            <person name="Kimata M."/>
            <person name="Watanabe M."/>
            <person name="Hiraoka S."/>
            <person name="Chiba Y."/>
            <person name="Ishida S."/>
            <person name="Ono Y."/>
            <person name="Takiguchi S."/>
            <person name="Watanabe S."/>
            <person name="Yosida M."/>
            <person name="Hotuta T."/>
            <person name="Kusano J."/>
            <person name="Kanehori K."/>
            <person name="Takahashi-Fujii A."/>
            <person name="Hara H."/>
            <person name="Tanase T.-O."/>
            <person name="Nomura Y."/>
            <person name="Togiya S."/>
            <person name="Komai F."/>
            <person name="Hara R."/>
            <person name="Takeuchi K."/>
            <person name="Arita M."/>
            <person name="Imose N."/>
            <person name="Musashino K."/>
            <person name="Yuuki H."/>
            <person name="Oshima A."/>
            <person name="Sasaki N."/>
            <person name="Aotsuka S."/>
            <person name="Yoshikawa Y."/>
            <person name="Matsunawa H."/>
            <person name="Ichihara T."/>
            <person name="Shiohata N."/>
            <person name="Sano S."/>
            <person name="Moriya S."/>
            <person name="Momiyama H."/>
            <person name="Satoh N."/>
            <person name="Takami S."/>
            <person name="Terashima Y."/>
            <person name="Suzuki O."/>
            <person name="Nakagawa S."/>
            <person name="Senoh A."/>
            <person name="Mizoguchi H."/>
            <person name="Goto Y."/>
            <person name="Shimizu F."/>
            <person name="Wakebe H."/>
            <person name="Hishigaki H."/>
            <person name="Watanabe T."/>
            <person name="Sugiyama A."/>
            <person name="Takemoto M."/>
            <person name="Kawakami B."/>
            <person name="Yamazaki M."/>
            <person name="Watanabe K."/>
            <person name="Kumagai A."/>
            <person name="Itakura S."/>
            <person name="Fukuzumi Y."/>
            <person name="Fujimori Y."/>
            <person name="Komiyama M."/>
            <person name="Tashiro H."/>
            <person name="Tanigami A."/>
            <person name="Fujiwara T."/>
            <person name="Ono T."/>
            <person name="Yamada K."/>
            <person name="Fujii Y."/>
            <person name="Ozaki K."/>
            <person name="Hirao M."/>
            <person name="Ohmori Y."/>
            <person name="Kawabata A."/>
            <person name="Hikiji T."/>
            <person name="Kobatake N."/>
            <person name="Inagaki H."/>
            <person name="Ikema Y."/>
            <person name="Okamoto S."/>
            <person name="Okitani R."/>
            <person name="Kawakami T."/>
            <person name="Noguchi S."/>
            <person name="Itoh T."/>
            <person name="Shigeta K."/>
            <person name="Senba T."/>
            <person name="Matsumura K."/>
            <person name="Nakajima Y."/>
            <person name="Mizuno T."/>
            <person name="Morinaga M."/>
            <person name="Sasaki M."/>
            <person name="Togashi T."/>
            <person name="Oyama M."/>
            <person name="Hata H."/>
            <person name="Watanabe M."/>
            <person name="Komatsu T."/>
            <person name="Mizushima-Sugano J."/>
            <person name="Satoh T."/>
            <person name="Shirai Y."/>
            <person name="Takahashi Y."/>
            <person name="Nakagawa K."/>
            <person name="Okumura K."/>
            <person name="Nagase T."/>
            <person name="Nomura N."/>
            <person name="Kikuchi H."/>
            <person name="Masuho Y."/>
            <person name="Yamashita R."/>
            <person name="Nakai K."/>
            <person name="Yada T."/>
            <person name="Nakamura Y."/>
            <person name="Ohara O."/>
            <person name="Isogai T."/>
            <person name="Sugano S."/>
        </authorList>
    </citation>
    <scope>NUCLEOTIDE SEQUENCE [LARGE SCALE MRNA]</scope>
</reference>
<reference key="4">
    <citation type="submission" date="2005-04" db="EMBL/GenBank/DDBJ databases">
        <authorList>
            <person name="Suzuki Y."/>
            <person name="Sugano S."/>
            <person name="Totoki Y."/>
            <person name="Toyoda A."/>
            <person name="Takeda T."/>
            <person name="Sakaki Y."/>
            <person name="Tanaka A."/>
            <person name="Yokoyama S."/>
        </authorList>
    </citation>
    <scope>NUCLEOTIDE SEQUENCE [LARGE SCALE MRNA]</scope>
    <source>
        <tissue>Liver</tissue>
    </source>
</reference>
<reference key="5">
    <citation type="journal article" date="2004" name="Genome Res.">
        <title>The status, quality, and expansion of the NIH full-length cDNA project: the Mammalian Gene Collection (MGC).</title>
        <authorList>
            <consortium name="The MGC Project Team"/>
        </authorList>
    </citation>
    <scope>NUCLEOTIDE SEQUENCE [LARGE SCALE MRNA]</scope>
    <source>
        <tissue>Muscle</tissue>
    </source>
</reference>
<reference key="6">
    <citation type="journal article" date="2003" name="Nat. Biotechnol.">
        <title>Exploring proteomes and analyzing protein processing by mass spectrometric identification of sorted N-terminal peptides.</title>
        <authorList>
            <person name="Gevaert K."/>
            <person name="Goethals M."/>
            <person name="Martens L."/>
            <person name="Van Damme J."/>
            <person name="Staes A."/>
            <person name="Thomas G.R."/>
            <person name="Vandekerckhove J."/>
        </authorList>
    </citation>
    <scope>PROTEIN SEQUENCE OF 1-11</scope>
    <source>
        <tissue>Platelet</tissue>
    </source>
</reference>
<reference key="7">
    <citation type="journal article" date="1999" name="J. Biol. Chem.">
        <title>Precursor of pro-apoptotic cytokine modulates aminoacylation activity of tRNA synthetase.</title>
        <authorList>
            <person name="Park S.G."/>
            <person name="Jung K.H."/>
            <person name="Lee J.S."/>
            <person name="Jo Y.J."/>
            <person name="Motegi H."/>
            <person name="Kim S."/>
            <person name="Shiba K."/>
        </authorList>
    </citation>
    <scope>INTERACTION WITH AIMP1</scope>
</reference>
<reference key="8">
    <citation type="journal article" date="2000" name="J. Cell Biol.">
        <title>Nucleolar localization of human methionyl-tRNA synthetase and its role in ribosomal RNA synthesis.</title>
        <authorList>
            <person name="Ko Y.G."/>
            <person name="Kang Y.S."/>
            <person name="Kim E.K."/>
            <person name="Park S.G."/>
            <person name="Kim S."/>
        </authorList>
    </citation>
    <scope>SUBCELLULAR LOCATION</scope>
</reference>
<reference key="9">
    <citation type="journal article" date="2005" name="J. Biol. Chem.">
        <title>The C-terminal appended domain of human cytosolic leucyl-tRNA synthetase is indispensable in its interaction with arginyl-tRNA synthetase in the multi-tRNA synthetase complex.</title>
        <authorList>
            <person name="Ling C."/>
            <person name="Yao Y.N."/>
            <person name="Zheng Y.G."/>
            <person name="Wei H."/>
            <person name="Wang L."/>
            <person name="Wu X.F."/>
            <person name="Wang E.D."/>
        </authorList>
    </citation>
    <scope>CATALYTIC ACTIVITY</scope>
    <scope>BIOPHYSICOCHEMICAL PROPERTIES</scope>
    <scope>SUBCELLULAR LOCATION</scope>
    <scope>INTERACTION WITH LARS2</scope>
</reference>
<reference key="10">
    <citation type="journal article" date="2006" name="Biochemistry">
        <title>Two forms of human cytoplasmic arginyl-tRNA synthetase produced from two translation initiations by a single mRNA.</title>
        <authorList>
            <person name="Zheng Y.-G."/>
            <person name="Wei H."/>
            <person name="Ling C."/>
            <person name="Xu M.-G."/>
            <person name="Wang E.-D."/>
        </authorList>
    </citation>
    <scope>SUBCELLULAR LOCATION</scope>
    <scope>ALTERNATIVE INITIATION</scope>
</reference>
<reference key="11">
    <citation type="journal article" date="2007" name="J. Cell. Physiol.">
        <title>Proteasomes and RARS modulate AIMP1/EMAP II secretion in human cancer cell lines.</title>
        <authorList>
            <person name="Bottoni A."/>
            <person name="Vignali C."/>
            <person name="Piccin D."/>
            <person name="Tagliati F."/>
            <person name="Luchin A."/>
            <person name="Zatelli M.C."/>
            <person name="Uberti E.C."/>
        </authorList>
    </citation>
    <scope>FUNCTION</scope>
    <scope>INTERACTION WITH AIMP1</scope>
</reference>
<reference key="12">
    <citation type="journal article" date="2009" name="Anal. Chem.">
        <title>Lys-N and trypsin cover complementary parts of the phosphoproteome in a refined SCX-based approach.</title>
        <authorList>
            <person name="Gauci S."/>
            <person name="Helbig A.O."/>
            <person name="Slijper M."/>
            <person name="Krijgsveld J."/>
            <person name="Heck A.J."/>
            <person name="Mohammed S."/>
        </authorList>
    </citation>
    <scope>ACETYLATION [LARGE SCALE ANALYSIS] AT MET-1</scope>
    <scope>IDENTIFICATION BY MASS SPECTROMETRY [LARGE SCALE ANALYSIS]</scope>
</reference>
<reference key="13">
    <citation type="journal article" date="2009" name="J. Biol. Chem.">
        <title>Dissection of the structural organization of the aminoacyl-tRNA synthetase complex.</title>
        <authorList>
            <person name="Kaminska M."/>
            <person name="Havrylenko S."/>
            <person name="Decottignies P."/>
            <person name="Gillet S."/>
            <person name="Le Marechal P."/>
            <person name="Negrutskii B."/>
            <person name="Mirande M."/>
        </authorList>
    </citation>
    <scope>SUBUNIT</scope>
    <scope>IDENTIFICATION BY MASS SPECTROMETRY</scope>
</reference>
<reference key="14">
    <citation type="journal article" date="2009" name="J. Biol. Chem.">
        <title>Dynamic Organization of Aminoacyl-tRNA Synthetase Complexes in the Cytoplasm of Human Cells.</title>
        <authorList>
            <person name="Kaminska M."/>
            <person name="Havrylenko S."/>
            <person name="Decottignies P."/>
            <person name="Le Marechal P."/>
            <person name="Negrutskii B."/>
            <person name="Mirande M."/>
        </authorList>
    </citation>
    <scope>SUBCELLULAR LOCATION</scope>
    <scope>SUBUNIT</scope>
</reference>
<reference key="15">
    <citation type="journal article" date="2009" name="Science">
        <title>Lysine acetylation targets protein complexes and co-regulates major cellular functions.</title>
        <authorList>
            <person name="Choudhary C."/>
            <person name="Kumar C."/>
            <person name="Gnad F."/>
            <person name="Nielsen M.L."/>
            <person name="Rehman M."/>
            <person name="Walther T.C."/>
            <person name="Olsen J.V."/>
            <person name="Mann M."/>
        </authorList>
    </citation>
    <scope>IDENTIFICATION BY MASS SPECTROMETRY [LARGE SCALE ANALYSIS]</scope>
</reference>
<reference key="16">
    <citation type="journal article" date="2011" name="BMC Syst. Biol.">
        <title>Initial characterization of the human central proteome.</title>
        <authorList>
            <person name="Burkard T.R."/>
            <person name="Planyavsky M."/>
            <person name="Kaupe I."/>
            <person name="Breitwieser F.P."/>
            <person name="Buerckstuemmer T."/>
            <person name="Bennett K.L."/>
            <person name="Superti-Furga G."/>
            <person name="Colinge J."/>
        </authorList>
    </citation>
    <scope>IDENTIFICATION BY MASS SPECTROMETRY [LARGE SCALE ANALYSIS]</scope>
</reference>
<reference key="17">
    <citation type="journal article" date="2012" name="Mol. Cell. Proteomics">
        <title>Comparative large-scale characterisation of plant vs. mammal proteins reveals similar and idiosyncratic N-alpha acetylation features.</title>
        <authorList>
            <person name="Bienvenut W.V."/>
            <person name="Sumpton D."/>
            <person name="Martinez A."/>
            <person name="Lilla S."/>
            <person name="Espagne C."/>
            <person name="Meinnel T."/>
            <person name="Giglione C."/>
        </authorList>
    </citation>
    <scope>ACETYLATION [LARGE SCALE ANALYSIS] AT MET-1</scope>
    <scope>IDENTIFICATION BY MASS SPECTROMETRY [LARGE SCALE ANALYSIS]</scope>
</reference>
<reference key="18">
    <citation type="journal article" date="2012" name="Proc. Natl. Acad. Sci. U.S.A.">
        <title>N-terminal acetylome analyses and functional insights of the N-terminal acetyltransferase NatB.</title>
        <authorList>
            <person name="Van Damme P."/>
            <person name="Lasa M."/>
            <person name="Polevoda B."/>
            <person name="Gazquez C."/>
            <person name="Elosegui-Artola A."/>
            <person name="Kim D.S."/>
            <person name="De Juan-Pardo E."/>
            <person name="Demeyer K."/>
            <person name="Hole K."/>
            <person name="Larrea E."/>
            <person name="Timmerman E."/>
            <person name="Prieto J."/>
            <person name="Arnesen T."/>
            <person name="Sherman F."/>
            <person name="Gevaert K."/>
            <person name="Aldabe R."/>
        </authorList>
    </citation>
    <scope>ACETYLATION [LARGE SCALE ANALYSIS] AT MET-1</scope>
    <scope>IDENTIFICATION BY MASS SPECTROMETRY [LARGE SCALE ANALYSIS]</scope>
</reference>
<reference key="19">
    <citation type="journal article" date="2014" name="Am. J. Hum. Genet.">
        <title>Mutations in QARS, encoding glutaminyl-tRNA synthetase, cause progressive microcephaly, cerebral-cerebellar atrophy, and intractable seizures.</title>
        <authorList>
            <person name="Zhang X."/>
            <person name="Ling J."/>
            <person name="Barcia G."/>
            <person name="Jing L."/>
            <person name="Wu J."/>
            <person name="Barry B.J."/>
            <person name="Mochida G.H."/>
            <person name="Hill R.S."/>
            <person name="Weimer J.M."/>
            <person name="Stein Q."/>
            <person name="Poduri A."/>
            <person name="Partlow J.N."/>
            <person name="Ville D."/>
            <person name="Dulac O."/>
            <person name="Yu T.W."/>
            <person name="Lam A.T."/>
            <person name="Servattalab S."/>
            <person name="Rodriguez J."/>
            <person name="Boddaert N."/>
            <person name="Munnich A."/>
            <person name="Colleaux L."/>
            <person name="Zon L.I."/>
            <person name="Soll D."/>
            <person name="Walsh C.A."/>
            <person name="Nabbout R."/>
        </authorList>
    </citation>
    <scope>INTERACTION WITH QARS1</scope>
</reference>
<reference key="20">
    <citation type="journal article" date="2023" name="Life. Sci Alliance">
        <title>N-terminal proteoforms may engage in different protein complexes.</title>
        <authorList>
            <person name="Bogaert A."/>
            <person name="Fijalkowska D."/>
            <person name="Staes A."/>
            <person name="Van de Steene T."/>
            <person name="Vuylsteke M."/>
            <person name="Stadler C."/>
            <person name="Eyckerman S."/>
            <person name="Spirohn K."/>
            <person name="Hao T."/>
            <person name="Calderwood M.A."/>
            <person name="Gevaert K."/>
        </authorList>
    </citation>
    <scope>ACETYLATION AT MET-1 (ISOFORMS 1 AND 2)</scope>
</reference>
<reference key="21">
    <citation type="journal article" date="2014" name="Ann. Neurol.">
        <title>Mutations in RARS cause hypomyelination.</title>
        <authorList>
            <person name="Wolf N.I."/>
            <person name="Salomons G.S."/>
            <person name="Rodenburg R.J."/>
            <person name="Pouwels P.J."/>
            <person name="Schieving J.H."/>
            <person name="Derks T.G."/>
            <person name="Fock J.M."/>
            <person name="Rump P."/>
            <person name="van Beek D.M."/>
            <person name="van der Knaap M.S."/>
            <person name="Waisfisz Q."/>
        </authorList>
    </citation>
    <scope>INVOLVEMENT IN HLD9</scope>
    <scope>VARIANTS HLD9 GLY-2 AND GLN-512</scope>
</reference>
<reference key="22">
    <citation type="journal article" date="2014" name="J. Proteomics">
        <title>An enzyme assisted RP-RPLC approach for in-depth analysis of human liver phosphoproteome.</title>
        <authorList>
            <person name="Bian Y."/>
            <person name="Song C."/>
            <person name="Cheng K."/>
            <person name="Dong M."/>
            <person name="Wang F."/>
            <person name="Huang J."/>
            <person name="Sun D."/>
            <person name="Wang L."/>
            <person name="Ye M."/>
            <person name="Zou H."/>
        </authorList>
    </citation>
    <scope>IDENTIFICATION BY MASS SPECTROMETRY [LARGE SCALE ANALYSIS]</scope>
    <source>
        <tissue>Liver</tissue>
    </source>
</reference>
<reference evidence="16 17 18" key="23">
    <citation type="journal article" date="2014" name="FEBS Lett.">
        <title>The crystal structure of arginyl-tRNA synthetase from Homo sapiens.</title>
        <authorList>
            <person name="Kim H.S."/>
            <person name="Cha S.Y."/>
            <person name="Jo C.H."/>
            <person name="Han A."/>
            <person name="Hwang K.Y."/>
        </authorList>
    </citation>
    <scope>X-RAY CRYSTALLOGRAPHY (2.40 ANGSTROMS) OF 73-660 IN COMPLEXES WIT ARGININE AND CANAVANINE</scope>
    <scope>SUBUNIT</scope>
</reference>
<reference evidence="19" key="24">
    <citation type="journal article" date="2014" name="Proc. Natl. Acad. Sci. U.S.A.">
        <title>Structure of the ArgRS-GlnRS-AIMP1 complex and its implications for mammalian translation.</title>
        <authorList>
            <person name="Fu Y."/>
            <person name="Kim Y."/>
            <person name="Jin K.S."/>
            <person name="Kim H.S."/>
            <person name="Kim J.H."/>
            <person name="Wang D."/>
            <person name="Park M."/>
            <person name="Jo C.H."/>
            <person name="Kwon N.H."/>
            <person name="Kim D."/>
            <person name="Kim M.H."/>
            <person name="Jeon Y.H."/>
            <person name="Hwang K.Y."/>
            <person name="Kim S."/>
            <person name="Cho Y."/>
        </authorList>
    </citation>
    <scope>X-RAY CRYSTALLOGRAPHY (4.03 ANGSTROMS) IN COMPLEX WITH QARS1 AND AIMP1</scope>
    <scope>SUBUNIT</scope>
    <scope>FUNCTION</scope>
    <scope>CATALYTIC ACTIVITY</scope>
</reference>
<evidence type="ECO:0000250" key="1">
    <source>
        <dbReference type="UniProtKB" id="Q05506"/>
    </source>
</evidence>
<evidence type="ECO:0000269" key="2">
    <source>
    </source>
</evidence>
<evidence type="ECO:0000269" key="3">
    <source>
    </source>
</evidence>
<evidence type="ECO:0000269" key="4">
    <source>
    </source>
</evidence>
<evidence type="ECO:0000269" key="5">
    <source>
    </source>
</evidence>
<evidence type="ECO:0000269" key="6">
    <source>
    </source>
</evidence>
<evidence type="ECO:0000269" key="7">
    <source>
    </source>
</evidence>
<evidence type="ECO:0000269" key="8">
    <source>
    </source>
</evidence>
<evidence type="ECO:0000269" key="9">
    <source>
    </source>
</evidence>
<evidence type="ECO:0000269" key="10">
    <source>
    </source>
</evidence>
<evidence type="ECO:0000269" key="11">
    <source>
    </source>
</evidence>
<evidence type="ECO:0000269" key="12">
    <source>
    </source>
</evidence>
<evidence type="ECO:0000269" key="13">
    <source>
    </source>
</evidence>
<evidence type="ECO:0000305" key="14"/>
<evidence type="ECO:0000312" key="15">
    <source>
        <dbReference type="HGNC" id="HGNC:9870"/>
    </source>
</evidence>
<evidence type="ECO:0007744" key="16">
    <source>
        <dbReference type="PDB" id="4Q2T"/>
    </source>
</evidence>
<evidence type="ECO:0007744" key="17">
    <source>
        <dbReference type="PDB" id="4Q2X"/>
    </source>
</evidence>
<evidence type="ECO:0007744" key="18">
    <source>
        <dbReference type="PDB" id="4Q2Y"/>
    </source>
</evidence>
<evidence type="ECO:0007744" key="19">
    <source>
        <dbReference type="PDB" id="4R3Z"/>
    </source>
</evidence>
<evidence type="ECO:0007744" key="20">
    <source>
    </source>
</evidence>
<evidence type="ECO:0007744" key="21">
    <source>
    </source>
</evidence>
<evidence type="ECO:0007744" key="22">
    <source>
    </source>
</evidence>
<evidence type="ECO:0007829" key="23">
    <source>
        <dbReference type="PDB" id="4Q2T"/>
    </source>
</evidence>
<evidence type="ECO:0007829" key="24">
    <source>
        <dbReference type="PDB" id="4Q2X"/>
    </source>
</evidence>
<evidence type="ECO:0007829" key="25">
    <source>
        <dbReference type="PDB" id="4ZAJ"/>
    </source>
</evidence>
<organism>
    <name type="scientific">Homo sapiens</name>
    <name type="common">Human</name>
    <dbReference type="NCBI Taxonomy" id="9606"/>
    <lineage>
        <taxon>Eukaryota</taxon>
        <taxon>Metazoa</taxon>
        <taxon>Chordata</taxon>
        <taxon>Craniata</taxon>
        <taxon>Vertebrata</taxon>
        <taxon>Euteleostomi</taxon>
        <taxon>Mammalia</taxon>
        <taxon>Eutheria</taxon>
        <taxon>Euarchontoglires</taxon>
        <taxon>Primates</taxon>
        <taxon>Haplorrhini</taxon>
        <taxon>Catarrhini</taxon>
        <taxon>Hominidae</taxon>
        <taxon>Homo</taxon>
    </lineage>
</organism>
<keyword id="KW-0002">3D-structure</keyword>
<keyword id="KW-0007">Acetylation</keyword>
<keyword id="KW-0024">Alternative initiation</keyword>
<keyword id="KW-0030">Aminoacyl-tRNA synthetase</keyword>
<keyword id="KW-0067">ATP-binding</keyword>
<keyword id="KW-0963">Cytoplasm</keyword>
<keyword id="KW-0903">Direct protein sequencing</keyword>
<keyword id="KW-0225">Disease variant</keyword>
<keyword id="KW-1026">Leukodystrophy</keyword>
<keyword id="KW-0436">Ligase</keyword>
<keyword id="KW-0547">Nucleotide-binding</keyword>
<keyword id="KW-0648">Protein biosynthesis</keyword>
<keyword id="KW-1267">Proteomics identification</keyword>
<keyword id="KW-1185">Reference proteome</keyword>
<protein>
    <recommendedName>
        <fullName>Arginine--tRNA ligase, cytoplasmic</fullName>
        <ecNumber evidence="4 12">6.1.1.19</ecNumber>
    </recommendedName>
    <alternativeName>
        <fullName>Arginyl-tRNA synthetase</fullName>
        <shortName>ArgRS</shortName>
    </alternativeName>
</protein>
<accession>P54136</accession>
<accession>B2RBS9</accession>
<accession>Q53GY4</accession>
<accession>Q9BWA1</accession>
<proteinExistence type="evidence at protein level"/>
<dbReference type="EC" id="6.1.1.19" evidence="4 12"/>
<dbReference type="EMBL" id="S80343">
    <property type="protein sequence ID" value="AAB35627.1"/>
    <property type="molecule type" value="mRNA"/>
</dbReference>
<dbReference type="EMBL" id="BT007394">
    <property type="protein sequence ID" value="AAP36058.1"/>
    <property type="molecule type" value="mRNA"/>
</dbReference>
<dbReference type="EMBL" id="AK314795">
    <property type="protein sequence ID" value="BAG37326.1"/>
    <property type="molecule type" value="mRNA"/>
</dbReference>
<dbReference type="EMBL" id="AK222797">
    <property type="protein sequence ID" value="BAD96517.1"/>
    <property type="molecule type" value="mRNA"/>
</dbReference>
<dbReference type="EMBL" id="BC000528">
    <property type="protein sequence ID" value="AAH00528.1"/>
    <property type="molecule type" value="mRNA"/>
</dbReference>
<dbReference type="EMBL" id="BC014619">
    <property type="protein sequence ID" value="AAH14619.1"/>
    <property type="molecule type" value="mRNA"/>
</dbReference>
<dbReference type="CCDS" id="CCDS4367.1">
    <molecule id="P54136-1"/>
</dbReference>
<dbReference type="PIR" id="JC4365">
    <property type="entry name" value="JC4365"/>
</dbReference>
<dbReference type="RefSeq" id="NP_002878.2">
    <molecule id="P54136-1"/>
    <property type="nucleotide sequence ID" value="NM_002887.3"/>
</dbReference>
<dbReference type="PDB" id="4Q2T">
    <property type="method" value="X-ray"/>
    <property type="resolution" value="2.40 A"/>
    <property type="chains" value="A/B=73-660"/>
</dbReference>
<dbReference type="PDB" id="4Q2X">
    <property type="method" value="X-ray"/>
    <property type="resolution" value="2.80 A"/>
    <property type="chains" value="A/B=73-660"/>
</dbReference>
<dbReference type="PDB" id="4Q2Y">
    <property type="method" value="X-ray"/>
    <property type="resolution" value="2.80 A"/>
    <property type="chains" value="A/B=73-660"/>
</dbReference>
<dbReference type="PDB" id="4R3Z">
    <property type="method" value="X-ray"/>
    <property type="resolution" value="4.03 A"/>
    <property type="chains" value="B=1-660"/>
</dbReference>
<dbReference type="PDB" id="4ZAJ">
    <property type="method" value="X-ray"/>
    <property type="resolution" value="2.22 A"/>
    <property type="chains" value="A=73-660"/>
</dbReference>
<dbReference type="PDBsum" id="4Q2T"/>
<dbReference type="PDBsum" id="4Q2X"/>
<dbReference type="PDBsum" id="4Q2Y"/>
<dbReference type="PDBsum" id="4R3Z"/>
<dbReference type="PDBsum" id="4ZAJ"/>
<dbReference type="SMR" id="P54136"/>
<dbReference type="BioGRID" id="111852">
    <property type="interactions" value="343"/>
</dbReference>
<dbReference type="ComplexPortal" id="CPX-2469">
    <property type="entry name" value="Multiaminoacyl-tRNA synthetase complex"/>
</dbReference>
<dbReference type="CORUM" id="P54136"/>
<dbReference type="FunCoup" id="P54136">
    <property type="interactions" value="2702"/>
</dbReference>
<dbReference type="IntAct" id="P54136">
    <property type="interactions" value="86"/>
</dbReference>
<dbReference type="MINT" id="P54136"/>
<dbReference type="STRING" id="9606.ENSP00000231572"/>
<dbReference type="BindingDB" id="P54136"/>
<dbReference type="ChEMBL" id="CHEMBL2824"/>
<dbReference type="GlyGen" id="P54136">
    <property type="glycosylation" value="1 site, 1 O-linked glycan (1 site)"/>
</dbReference>
<dbReference type="iPTMnet" id="P54136"/>
<dbReference type="MetOSite" id="P54136"/>
<dbReference type="PhosphoSitePlus" id="P54136"/>
<dbReference type="SwissPalm" id="P54136"/>
<dbReference type="BioMuta" id="RARS"/>
<dbReference type="DMDM" id="20178331"/>
<dbReference type="jPOST" id="P54136"/>
<dbReference type="MassIVE" id="P54136"/>
<dbReference type="PaxDb" id="9606-ENSP00000231572"/>
<dbReference type="PeptideAtlas" id="P54136"/>
<dbReference type="ProteomicsDB" id="56650">
    <molecule id="P54136-1"/>
</dbReference>
<dbReference type="ProteomicsDB" id="56651">
    <molecule id="P54136-2"/>
</dbReference>
<dbReference type="Pumba" id="P54136"/>
<dbReference type="ABCD" id="P54136">
    <property type="antibodies" value="1 sequenced antibody"/>
</dbReference>
<dbReference type="Antibodypedia" id="1285">
    <property type="antibodies" value="246 antibodies from 32 providers"/>
</dbReference>
<dbReference type="DNASU" id="5917"/>
<dbReference type="Ensembl" id="ENST00000231572.8">
    <molecule id="P54136-1"/>
    <property type="protein sequence ID" value="ENSP00000231572.3"/>
    <property type="gene ID" value="ENSG00000113643.9"/>
</dbReference>
<dbReference type="GeneID" id="5917"/>
<dbReference type="KEGG" id="hsa:5917"/>
<dbReference type="MANE-Select" id="ENST00000231572.8">
    <property type="protein sequence ID" value="ENSP00000231572.3"/>
    <property type="RefSeq nucleotide sequence ID" value="NM_002887.4"/>
    <property type="RefSeq protein sequence ID" value="NP_002878.2"/>
</dbReference>
<dbReference type="UCSC" id="uc003lzx.4">
    <molecule id="P54136-1"/>
    <property type="organism name" value="human"/>
</dbReference>
<dbReference type="AGR" id="HGNC:9870"/>
<dbReference type="CTD" id="5917"/>
<dbReference type="DisGeNET" id="5917"/>
<dbReference type="GeneCards" id="RARS1"/>
<dbReference type="HGNC" id="HGNC:9870">
    <property type="gene designation" value="RARS1"/>
</dbReference>
<dbReference type="HPA" id="ENSG00000113643">
    <property type="expression patterns" value="Low tissue specificity"/>
</dbReference>
<dbReference type="MalaCards" id="RARS1"/>
<dbReference type="MIM" id="107820">
    <property type="type" value="gene"/>
</dbReference>
<dbReference type="MIM" id="616140">
    <property type="type" value="phenotype"/>
</dbReference>
<dbReference type="neXtProt" id="NX_P54136"/>
<dbReference type="OpenTargets" id="ENSG00000113643"/>
<dbReference type="Orphanet" id="438114">
    <property type="disease" value="RARS-related autosomal recessive hypomyelinating leukodystrophy"/>
</dbReference>
<dbReference type="PharmGKB" id="PA34231"/>
<dbReference type="VEuPathDB" id="HostDB:ENSG00000113643"/>
<dbReference type="eggNOG" id="KOG4426">
    <property type="taxonomic scope" value="Eukaryota"/>
</dbReference>
<dbReference type="GeneTree" id="ENSGT00530000063407"/>
<dbReference type="HOGENOM" id="CLU_006406_5_1_1"/>
<dbReference type="InParanoid" id="P54136"/>
<dbReference type="OMA" id="NKPLHLG"/>
<dbReference type="OrthoDB" id="68056at2759"/>
<dbReference type="PAN-GO" id="P54136">
    <property type="GO annotations" value="2 GO annotations based on evolutionary models"/>
</dbReference>
<dbReference type="PhylomeDB" id="P54136"/>
<dbReference type="TreeFam" id="TF106111"/>
<dbReference type="BRENDA" id="6.1.1.19">
    <property type="organism ID" value="2681"/>
</dbReference>
<dbReference type="PathwayCommons" id="P54136"/>
<dbReference type="Reactome" id="R-HSA-2408522">
    <property type="pathway name" value="Selenoamino acid metabolism"/>
</dbReference>
<dbReference type="Reactome" id="R-HSA-379716">
    <property type="pathway name" value="Cytosolic tRNA aminoacylation"/>
</dbReference>
<dbReference type="Reactome" id="R-HSA-9856649">
    <property type="pathway name" value="Transcriptional and post-translational regulation of MITF-M expression and activity"/>
</dbReference>
<dbReference type="SABIO-RK" id="P54136"/>
<dbReference type="SignaLink" id="P54136"/>
<dbReference type="SIGNOR" id="P54136"/>
<dbReference type="BioGRID-ORCS" id="5917">
    <property type="hits" value="644 hits in 1127 CRISPR screens"/>
</dbReference>
<dbReference type="CD-CODE" id="91857CE7">
    <property type="entry name" value="Nucleolus"/>
</dbReference>
<dbReference type="CD-CODE" id="FB4E32DD">
    <property type="entry name" value="Presynaptic clusters and postsynaptic densities"/>
</dbReference>
<dbReference type="ChiTaRS" id="RARS">
    <property type="organism name" value="human"/>
</dbReference>
<dbReference type="EvolutionaryTrace" id="P54136"/>
<dbReference type="GeneWiki" id="RARS_(gene)"/>
<dbReference type="GenomeRNAi" id="5917"/>
<dbReference type="Pharos" id="P54136">
    <property type="development level" value="Tchem"/>
</dbReference>
<dbReference type="PRO" id="PR:P54136"/>
<dbReference type="Proteomes" id="UP000005640">
    <property type="component" value="Chromosome 5"/>
</dbReference>
<dbReference type="RNAct" id="P54136">
    <property type="molecule type" value="protein"/>
</dbReference>
<dbReference type="Bgee" id="ENSG00000113643">
    <property type="expression patterns" value="Expressed in calcaneal tendon and 154 other cell types or tissues"/>
</dbReference>
<dbReference type="ExpressionAtlas" id="P54136">
    <property type="expression patterns" value="baseline and differential"/>
</dbReference>
<dbReference type="GO" id="GO:0017101">
    <property type="term" value="C:aminoacyl-tRNA synthetase multienzyme complex"/>
    <property type="evidence" value="ECO:0000314"/>
    <property type="project" value="UniProtKB"/>
</dbReference>
<dbReference type="GO" id="GO:0005737">
    <property type="term" value="C:cytoplasm"/>
    <property type="evidence" value="ECO:0000314"/>
    <property type="project" value="CAFA"/>
</dbReference>
<dbReference type="GO" id="GO:0005829">
    <property type="term" value="C:cytosol"/>
    <property type="evidence" value="ECO:0000314"/>
    <property type="project" value="HPA"/>
</dbReference>
<dbReference type="GO" id="GO:0070062">
    <property type="term" value="C:extracellular exosome"/>
    <property type="evidence" value="ECO:0007005"/>
    <property type="project" value="UniProtKB"/>
</dbReference>
<dbReference type="GO" id="GO:0016020">
    <property type="term" value="C:membrane"/>
    <property type="evidence" value="ECO:0007005"/>
    <property type="project" value="UniProtKB"/>
</dbReference>
<dbReference type="GO" id="GO:0005730">
    <property type="term" value="C:nucleolus"/>
    <property type="evidence" value="ECO:0000314"/>
    <property type="project" value="HPA"/>
</dbReference>
<dbReference type="GO" id="GO:0005654">
    <property type="term" value="C:nucleoplasm"/>
    <property type="evidence" value="ECO:0000314"/>
    <property type="project" value="HPA"/>
</dbReference>
<dbReference type="GO" id="GO:0005634">
    <property type="term" value="C:nucleus"/>
    <property type="evidence" value="ECO:0000314"/>
    <property type="project" value="CAFA"/>
</dbReference>
<dbReference type="GO" id="GO:0034618">
    <property type="term" value="F:arginine binding"/>
    <property type="evidence" value="ECO:0007669"/>
    <property type="project" value="Ensembl"/>
</dbReference>
<dbReference type="GO" id="GO:0004814">
    <property type="term" value="F:arginine-tRNA ligase activity"/>
    <property type="evidence" value="ECO:0000314"/>
    <property type="project" value="UniProtKB"/>
</dbReference>
<dbReference type="GO" id="GO:0005524">
    <property type="term" value="F:ATP binding"/>
    <property type="evidence" value="ECO:0007669"/>
    <property type="project" value="UniProtKB-KW"/>
</dbReference>
<dbReference type="GO" id="GO:0045296">
    <property type="term" value="F:cadherin binding"/>
    <property type="evidence" value="ECO:0007005"/>
    <property type="project" value="BHF-UCL"/>
</dbReference>
<dbReference type="GO" id="GO:0000049">
    <property type="term" value="F:tRNA binding"/>
    <property type="evidence" value="ECO:0007669"/>
    <property type="project" value="Ensembl"/>
</dbReference>
<dbReference type="GO" id="GO:0006420">
    <property type="term" value="P:arginyl-tRNA aminoacylation"/>
    <property type="evidence" value="ECO:0000314"/>
    <property type="project" value="UniProtKB"/>
</dbReference>
<dbReference type="GO" id="GO:0006418">
    <property type="term" value="P:tRNA aminoacylation for protein translation"/>
    <property type="evidence" value="ECO:0000304"/>
    <property type="project" value="Reactome"/>
</dbReference>
<dbReference type="CDD" id="cd00671">
    <property type="entry name" value="ArgRS_core"/>
    <property type="match status" value="1"/>
</dbReference>
<dbReference type="FunFam" id="1.10.730.10:FF:000016">
    <property type="entry name" value="Arginine--tRNA ligase, cytoplasmic"/>
    <property type="match status" value="1"/>
</dbReference>
<dbReference type="FunFam" id="3.30.1360.70:FF:000002">
    <property type="entry name" value="arginine--tRNA ligase, cytoplasmic"/>
    <property type="match status" value="1"/>
</dbReference>
<dbReference type="FunFam" id="3.40.50.620:FF:000084">
    <property type="entry name" value="arginine--tRNA ligase, cytoplasmic"/>
    <property type="match status" value="1"/>
</dbReference>
<dbReference type="Gene3D" id="3.30.1360.70">
    <property type="entry name" value="Arginyl tRNA synthetase N-terminal domain"/>
    <property type="match status" value="1"/>
</dbReference>
<dbReference type="Gene3D" id="3.40.50.620">
    <property type="entry name" value="HUPs"/>
    <property type="match status" value="1"/>
</dbReference>
<dbReference type="Gene3D" id="1.10.730.10">
    <property type="entry name" value="Isoleucyl-tRNA Synthetase, Domain 1"/>
    <property type="match status" value="1"/>
</dbReference>
<dbReference type="HAMAP" id="MF_00123">
    <property type="entry name" value="Arg_tRNA_synth"/>
    <property type="match status" value="1"/>
</dbReference>
<dbReference type="InterPro" id="IPR001412">
    <property type="entry name" value="aa-tRNA-synth_I_CS"/>
</dbReference>
<dbReference type="InterPro" id="IPR001278">
    <property type="entry name" value="Arg-tRNA-ligase"/>
</dbReference>
<dbReference type="InterPro" id="IPR005148">
    <property type="entry name" value="Arg-tRNA-synth_N"/>
</dbReference>
<dbReference type="InterPro" id="IPR036695">
    <property type="entry name" value="Arg-tRNA-synth_N_sf"/>
</dbReference>
<dbReference type="InterPro" id="IPR035684">
    <property type="entry name" value="ArgRS_core"/>
</dbReference>
<dbReference type="InterPro" id="IPR008909">
    <property type="entry name" value="DALR_anticod-bd"/>
</dbReference>
<dbReference type="InterPro" id="IPR014729">
    <property type="entry name" value="Rossmann-like_a/b/a_fold"/>
</dbReference>
<dbReference type="InterPro" id="IPR009080">
    <property type="entry name" value="tRNAsynth_Ia_anticodon-bd"/>
</dbReference>
<dbReference type="NCBIfam" id="TIGR00456">
    <property type="entry name" value="argS"/>
    <property type="match status" value="1"/>
</dbReference>
<dbReference type="PANTHER" id="PTHR11956:SF5">
    <property type="entry name" value="ARGININE--TRNA LIGASE, CYTOPLASMIC"/>
    <property type="match status" value="1"/>
</dbReference>
<dbReference type="PANTHER" id="PTHR11956">
    <property type="entry name" value="ARGINYL-TRNA SYNTHETASE"/>
    <property type="match status" value="1"/>
</dbReference>
<dbReference type="Pfam" id="PF03485">
    <property type="entry name" value="Arg_tRNA_synt_N"/>
    <property type="match status" value="1"/>
</dbReference>
<dbReference type="Pfam" id="PF05746">
    <property type="entry name" value="DALR_1"/>
    <property type="match status" value="1"/>
</dbReference>
<dbReference type="Pfam" id="PF00750">
    <property type="entry name" value="tRNA-synt_1d"/>
    <property type="match status" value="1"/>
</dbReference>
<dbReference type="PRINTS" id="PR01038">
    <property type="entry name" value="TRNASYNTHARG"/>
</dbReference>
<dbReference type="SMART" id="SM01016">
    <property type="entry name" value="Arg_tRNA_synt_N"/>
    <property type="match status" value="1"/>
</dbReference>
<dbReference type="SMART" id="SM00836">
    <property type="entry name" value="DALR_1"/>
    <property type="match status" value="1"/>
</dbReference>
<dbReference type="SUPFAM" id="SSF47323">
    <property type="entry name" value="Anticodon-binding domain of a subclass of class I aminoacyl-tRNA synthetases"/>
    <property type="match status" value="1"/>
</dbReference>
<dbReference type="SUPFAM" id="SSF55190">
    <property type="entry name" value="Arginyl-tRNA synthetase (ArgRS), N-terminal 'additional' domain"/>
    <property type="match status" value="1"/>
</dbReference>
<dbReference type="SUPFAM" id="SSF52374">
    <property type="entry name" value="Nucleotidylyl transferase"/>
    <property type="match status" value="1"/>
</dbReference>
<dbReference type="PROSITE" id="PS00178">
    <property type="entry name" value="AA_TRNA_LIGASE_I"/>
    <property type="match status" value="1"/>
</dbReference>
<sequence length="660" mass="75379">MDVLVSECSARLLQQEEEIKSLTAEIDRLKNCGCLGASPNLEQLQEENLKLKYRLNILRKSLQAERNKPTKNMINIISRLQEVFGHAIKAAYPDLENPPLLVTPSQQAKFGDYQCNSAMGISQMLKTKEQKVNPREIAENITKHLPDNECIEKVEIAGPGFINVHLRKDFVSEQLTSLLVNGVQLPALGENKKVIVDFSSPNIAKEMHVGHLRSTIIGESISRLFEFAGYDVLRLNHVGDWGTQFGMLIAHLQDKFPDYLTVSPPIGDLQVFYKESKKRFDTEEEFKKRAYQCVVLLQGKNPDITKAWKLICDVSRQELNKIYDALDVSLIERGESFYQDRMNDIVKEFEDRGFVQVDDGRKIVFVPGCSIPLTIVKSDGGYTYDTSDLAAIKQRLFEEKADMIIYVVDNGQSVHFQTIFAAAQMIGWYDPKVTRVFHAGFGVVLGEDKKKFKTRSGETVRLMDLLGEGLKRSMDKLKEKERDKVLTAEELNAAQTSVAYGCIKYADLSHNRLNDYIFSFDKMLDDRGNTAAYLLYAFTRIRSIARLANIDEEMLQKAARETKILLDHEKEWKLGRCILRFPEILQKILDDLFLHTLCDYIYELATAFTEFYDSCYCVEKDRQTGKILKVNMWRMLLCEAVAAVMAKGFDILGIKPVQRM</sequence>